<gene>
    <name evidence="12" type="primary">AUR1</name>
    <name type="ordered locus">YKL004W</name>
</gene>
<accession>P36107</accession>
<accession>D6VXT3</accession>
<accession>Q92324</accession>
<organism>
    <name type="scientific">Saccharomyces cerevisiae (strain ATCC 204508 / S288c)</name>
    <name type="common">Baker's yeast</name>
    <dbReference type="NCBI Taxonomy" id="559292"/>
    <lineage>
        <taxon>Eukaryota</taxon>
        <taxon>Fungi</taxon>
        <taxon>Dikarya</taxon>
        <taxon>Ascomycota</taxon>
        <taxon>Saccharomycotina</taxon>
        <taxon>Saccharomycetes</taxon>
        <taxon>Saccharomycetales</taxon>
        <taxon>Saccharomycetaceae</taxon>
        <taxon>Saccharomyces</taxon>
    </lineage>
</organism>
<sequence>MANPFSRWFLSERPPNCHVADLETSLDPHQTLLKVQKYKPALSDWVHYIFLGSIMLFVFITNPAPWIFKILFYCFLGTLFIIPATSQFFFNALPILTWVALYFTSSYFPDDRRPPITVKVLPAVETILYGDNLSDILATSTNSFLDILAWLPYGLFHFGAPFVVAAILFVFGPPTVLQGYAFAFGYMNLFGVIMQNVFPAAPPWYKILYGLQSANYDMHGSPGGLARIDKLLGINMYTTAFSNSSVIFGAFPSLHSGCATMEALFFCYCFPKLKPLFIAYVCWLWWSTMYLTHHYFVDLMAGSVLSYVIFQYTKYTHLPIVDTSLFCRWSYTSIEKYDISKSDPLAADSNDIESVPLSNLELDFDLNMTDEPSVSPSLFDGSTSVSRSSATSITSLGVKRA</sequence>
<keyword id="KW-0325">Glycoprotein</keyword>
<keyword id="KW-0333">Golgi apparatus</keyword>
<keyword id="KW-0443">Lipid metabolism</keyword>
<keyword id="KW-0472">Membrane</keyword>
<keyword id="KW-0597">Phosphoprotein</keyword>
<keyword id="KW-1185">Reference proteome</keyword>
<keyword id="KW-0746">Sphingolipid metabolism</keyword>
<keyword id="KW-0808">Transferase</keyword>
<keyword id="KW-0812">Transmembrane</keyword>
<keyword id="KW-1133">Transmembrane helix</keyword>
<reference key="1">
    <citation type="journal article" date="1996" name="Mol. Gen. Genet.">
        <title>AUR1, a novel gene conferring aureobasidin resistance on Saccharomyces cerevisiae: a study of defective morphologies in Aur1p-depleted cells.</title>
        <authorList>
            <person name="Hashida-Okado T."/>
            <person name="Ogawa A."/>
            <person name="Endo M."/>
            <person name="Yasumoto R."/>
            <person name="Takesako K."/>
            <person name="Kato I."/>
        </authorList>
    </citation>
    <scope>NUCLEOTIDE SEQUENCE [GENOMIC DNA]</scope>
    <scope>MUTAGENESIS OF PHE-158</scope>
    <source>
        <strain>AR9-4A</strain>
    </source>
</reference>
<reference key="2">
    <citation type="journal article" date="1995" name="Antimicrob. Agents Chemother.">
        <title>The AUR1 gene in Saccharomyces cerevisiae encodes dominant resistance to the antifungal agent aureobasidin A (LY295337).</title>
        <authorList>
            <person name="Heidler S.A."/>
            <person name="Radding J.A."/>
        </authorList>
    </citation>
    <scope>NUCLEOTIDE SEQUENCE [GENOMIC DNA]</scope>
    <scope>MUTAGENESIS OF LEU-137 AND HIS-157</scope>
</reference>
<reference key="3">
    <citation type="journal article" date="1994" name="Nature">
        <title>Complete DNA sequence of yeast chromosome XI.</title>
        <authorList>
            <person name="Dujon B."/>
            <person name="Alexandraki D."/>
            <person name="Andre B."/>
            <person name="Ansorge W."/>
            <person name="Baladron V."/>
            <person name="Ballesta J.P.G."/>
            <person name="Banrevi A."/>
            <person name="Bolle P.-A."/>
            <person name="Bolotin-Fukuhara M."/>
            <person name="Bossier P."/>
            <person name="Bou G."/>
            <person name="Boyer J."/>
            <person name="Buitrago M.J."/>
            <person name="Cheret G."/>
            <person name="Colleaux L."/>
            <person name="Daignan-Fornier B."/>
            <person name="del Rey F."/>
            <person name="Dion C."/>
            <person name="Domdey H."/>
            <person name="Duesterhoeft A."/>
            <person name="Duesterhus S."/>
            <person name="Entian K.-D."/>
            <person name="Erfle H."/>
            <person name="Esteban P.F."/>
            <person name="Feldmann H."/>
            <person name="Fernandes L."/>
            <person name="Fobo G.M."/>
            <person name="Fritz C."/>
            <person name="Fukuhara H."/>
            <person name="Gabel C."/>
            <person name="Gaillon L."/>
            <person name="Garcia-Cantalejo J.M."/>
            <person name="Garcia-Ramirez J.J."/>
            <person name="Gent M.E."/>
            <person name="Ghazvini M."/>
            <person name="Goffeau A."/>
            <person name="Gonzalez A."/>
            <person name="Grothues D."/>
            <person name="Guerreiro P."/>
            <person name="Hegemann J.H."/>
            <person name="Hewitt N."/>
            <person name="Hilger F."/>
            <person name="Hollenberg C.P."/>
            <person name="Horaitis O."/>
            <person name="Indge K.J."/>
            <person name="Jacquier A."/>
            <person name="James C.M."/>
            <person name="Jauniaux J.-C."/>
            <person name="Jimenez A."/>
            <person name="Keuchel H."/>
            <person name="Kirchrath L."/>
            <person name="Kleine K."/>
            <person name="Koetter P."/>
            <person name="Legrain P."/>
            <person name="Liebl S."/>
            <person name="Louis E.J."/>
            <person name="Maia e Silva A."/>
            <person name="Marck C."/>
            <person name="Monnier A.-L."/>
            <person name="Moestl D."/>
            <person name="Mueller S."/>
            <person name="Obermaier B."/>
            <person name="Oliver S.G."/>
            <person name="Pallier C."/>
            <person name="Pascolo S."/>
            <person name="Pfeiffer F."/>
            <person name="Philippsen P."/>
            <person name="Planta R.J."/>
            <person name="Pohl F.M."/>
            <person name="Pohl T.M."/>
            <person name="Poehlmann R."/>
            <person name="Portetelle D."/>
            <person name="Purnelle B."/>
            <person name="Puzos V."/>
            <person name="Ramezani Rad M."/>
            <person name="Rasmussen S.W."/>
            <person name="Remacha M.A."/>
            <person name="Revuelta J.L."/>
            <person name="Richard G.-F."/>
            <person name="Rieger M."/>
            <person name="Rodrigues-Pousada C."/>
            <person name="Rose M."/>
            <person name="Rupp T."/>
            <person name="Santos M.A."/>
            <person name="Schwager C."/>
            <person name="Sensen C."/>
            <person name="Skala J."/>
            <person name="Soares H."/>
            <person name="Sor F."/>
            <person name="Stegemann J."/>
            <person name="Tettelin H."/>
            <person name="Thierry A."/>
            <person name="Tzermia M."/>
            <person name="Urrestarazu L.A."/>
            <person name="van Dyck L."/>
            <person name="van Vliet-Reedijk J.C."/>
            <person name="Valens M."/>
            <person name="Vandenbol M."/>
            <person name="Vilela C."/>
            <person name="Vissers S."/>
            <person name="von Wettstein D."/>
            <person name="Voss H."/>
            <person name="Wiemann S."/>
            <person name="Xu G."/>
            <person name="Zimmermann J."/>
            <person name="Haasemann M."/>
            <person name="Becker I."/>
            <person name="Mewes H.-W."/>
        </authorList>
    </citation>
    <scope>NUCLEOTIDE SEQUENCE [LARGE SCALE GENOMIC DNA]</scope>
    <source>
        <strain>ATCC 204508 / S288c</strain>
    </source>
</reference>
<reference key="4">
    <citation type="journal article" date="2014" name="G3 (Bethesda)">
        <title>The reference genome sequence of Saccharomyces cerevisiae: Then and now.</title>
        <authorList>
            <person name="Engel S.R."/>
            <person name="Dietrich F.S."/>
            <person name="Fisk D.G."/>
            <person name="Binkley G."/>
            <person name="Balakrishnan R."/>
            <person name="Costanzo M.C."/>
            <person name="Dwight S.S."/>
            <person name="Hitz B.C."/>
            <person name="Karra K."/>
            <person name="Nash R.S."/>
            <person name="Weng S."/>
            <person name="Wong E.D."/>
            <person name="Lloyd P."/>
            <person name="Skrzypek M.S."/>
            <person name="Miyasato S.R."/>
            <person name="Simison M."/>
            <person name="Cherry J.M."/>
        </authorList>
    </citation>
    <scope>GENOME REANNOTATION</scope>
    <source>
        <strain>ATCC 204508 / S288c</strain>
    </source>
</reference>
<reference key="5">
    <citation type="journal article" date="1997" name="J. Biol. Chem.">
        <title>Sphingolipid synthesis as a target for antifungal drugs. Complementation of the inositol phosphorylceramide synthase defect in a mutant strain of Saccharomyces cerevisiae by the AUR1 gene.</title>
        <authorList>
            <person name="Nagiec M.M."/>
            <person name="Nagiec E.E."/>
            <person name="Baltisberger J.A."/>
            <person name="Wells G.B."/>
            <person name="Lester R.L."/>
            <person name="Dickson R.C."/>
        </authorList>
    </citation>
    <scope>FUNCTION</scope>
</reference>
<reference key="6">
    <citation type="journal article" date="2000" name="Mol. Biol. Cell">
        <title>Inositol phosphorylceramide synthase is located in the Golgi apparatus of Saccharomyces cerevisiae.</title>
        <authorList>
            <person name="Levine T.P."/>
            <person name="Wiggins C.A."/>
            <person name="Munro S."/>
        </authorList>
    </citation>
    <scope>FUNCTION</scope>
    <scope>CATALYTIC ACTIVITY</scope>
    <scope>SUBCELLULAR LOCATION</scope>
    <scope>TOPOLOGY</scope>
    <scope>MUTAGENESIS OF HIS-294</scope>
</reference>
<reference key="7">
    <citation type="journal article" date="2003" name="Nature">
        <title>Global analysis of protein expression in yeast.</title>
        <authorList>
            <person name="Ghaemmaghami S."/>
            <person name="Huh W.-K."/>
            <person name="Bower K."/>
            <person name="Howson R.W."/>
            <person name="Belle A."/>
            <person name="Dephoure N."/>
            <person name="O'Shea E.K."/>
            <person name="Weissman J.S."/>
        </authorList>
    </citation>
    <scope>LEVEL OF PROTEIN EXPRESSION [LARGE SCALE ANALYSIS]</scope>
</reference>
<reference key="8">
    <citation type="journal article" date="2006" name="Proc. Natl. Acad. Sci. U.S.A.">
        <title>A global topology map of the Saccharomyces cerevisiae membrane proteome.</title>
        <authorList>
            <person name="Kim H."/>
            <person name="Melen K."/>
            <person name="Oesterberg M."/>
            <person name="von Heijne G."/>
        </authorList>
    </citation>
    <scope>TOPOLOGY [LARGE SCALE ANALYSIS]</scope>
    <source>
        <strain>ATCC 208353 / W303-1A</strain>
    </source>
</reference>
<reference key="9">
    <citation type="journal article" date="2007" name="J. Proteome Res.">
        <title>Large-scale phosphorylation analysis of alpha-factor-arrested Saccharomyces cerevisiae.</title>
        <authorList>
            <person name="Li X."/>
            <person name="Gerber S.A."/>
            <person name="Rudner A.D."/>
            <person name="Beausoleil S.A."/>
            <person name="Haas W."/>
            <person name="Villen J."/>
            <person name="Elias J.E."/>
            <person name="Gygi S.P."/>
        </authorList>
    </citation>
    <scope>PHOSPHORYLATION [LARGE SCALE ANALYSIS] AT SER-392 AND SER-395</scope>
    <scope>IDENTIFICATION BY MASS SPECTROMETRY [LARGE SCALE ANALYSIS]</scope>
    <source>
        <strain>ADR376</strain>
    </source>
</reference>
<reference key="10">
    <citation type="journal article" date="2008" name="Mol. Cell. Proteomics">
        <title>A multidimensional chromatography technology for in-depth phosphoproteome analysis.</title>
        <authorList>
            <person name="Albuquerque C.P."/>
            <person name="Smolka M.B."/>
            <person name="Payne S.H."/>
            <person name="Bafna V."/>
            <person name="Eng J."/>
            <person name="Zhou H."/>
        </authorList>
    </citation>
    <scope>IDENTIFICATION BY MASS SPECTROMETRY [LARGE SCALE ANALYSIS]</scope>
</reference>
<reference key="11">
    <citation type="journal article" date="2009" name="Antimicrob. Agents Chemother.">
        <title>Inhibition of inositol phosphorylceramide synthase by the cyclic peptide aureobasidin A.</title>
        <authorList>
            <person name="Aeed P.A."/>
            <person name="Young C.L."/>
            <person name="Nagiec M.M."/>
            <person name="Elhammer A.P."/>
        </authorList>
    </citation>
    <scope>FUNCTION</scope>
    <scope>BIOPHYSICOCHEMICAL PROPERTIES</scope>
    <scope>ACTIVITY REGULATION</scope>
</reference>
<reference key="12">
    <citation type="journal article" date="2009" name="Mol. Biol. Cell">
        <title>Kei1: a novel subunit of inositolphosphorylceramide synthase, essential for its enzyme activity and Golgi localization.</title>
        <authorList>
            <person name="Sato K."/>
            <person name="Noda Y."/>
            <person name="Yoda K."/>
        </authorList>
    </citation>
    <scope>FUNCTION</scope>
    <scope>SUBCELLULAR LOCATION</scope>
    <scope>INTERACTION WITH KEI1</scope>
</reference>
<reference key="13">
    <citation type="journal article" date="2009" name="Science">
        <title>Global analysis of Cdk1 substrate phosphorylation sites provides insights into evolution.</title>
        <authorList>
            <person name="Holt L.J."/>
            <person name="Tuch B.B."/>
            <person name="Villen J."/>
            <person name="Johnson A.D."/>
            <person name="Gygi S.P."/>
            <person name="Morgan D.O."/>
        </authorList>
    </citation>
    <scope>IDENTIFICATION BY MASS SPECTROMETRY [LARGE SCALE ANALYSIS]</scope>
</reference>
<protein>
    <recommendedName>
        <fullName evidence="11">Inositol phosphorylceramide synthase catalytic subunit AUR1</fullName>
        <shortName evidence="11">IPC synthase catalytic subunit AUR1</shortName>
        <ecNumber evidence="3">2.7.1.227</ecNumber>
    </recommendedName>
    <alternativeName>
        <fullName evidence="12">Aureobasidin A resistance protein</fullName>
    </alternativeName>
    <alternativeName>
        <fullName evidence="11">Phosphatidylinositol:ceramide phosphoinositol transferase</fullName>
    </alternativeName>
</protein>
<proteinExistence type="evidence at protein level"/>
<evidence type="ECO:0000255" key="1"/>
<evidence type="ECO:0000256" key="2">
    <source>
        <dbReference type="SAM" id="MobiDB-lite"/>
    </source>
</evidence>
<evidence type="ECO:0000269" key="3">
    <source>
    </source>
</evidence>
<evidence type="ECO:0000269" key="4">
    <source>
    </source>
</evidence>
<evidence type="ECO:0000269" key="5">
    <source>
    </source>
</evidence>
<evidence type="ECO:0000269" key="6">
    <source>
    </source>
</evidence>
<evidence type="ECO:0000269" key="7">
    <source>
    </source>
</evidence>
<evidence type="ECO:0000269" key="8">
    <source>
    </source>
</evidence>
<evidence type="ECO:0000269" key="9">
    <source>
    </source>
</evidence>
<evidence type="ECO:0000269" key="10">
    <source>
    </source>
</evidence>
<evidence type="ECO:0000303" key="11">
    <source>
    </source>
</evidence>
<evidence type="ECO:0000303" key="12">
    <source>
    </source>
</evidence>
<evidence type="ECO:0000305" key="13"/>
<evidence type="ECO:0000305" key="14">
    <source>
    </source>
</evidence>
<evidence type="ECO:0007744" key="15">
    <source>
    </source>
</evidence>
<comment type="function">
    <text evidence="3 6 7 10">Catalytic component of the inositol phosphorylceramide synthase which catalyzes the addition of a phosphorylinositol group onto ceramide to form inositol phosphorylceramide, an essential step in sphingolipid biosynthesis.</text>
</comment>
<comment type="catalytic activity">
    <reaction evidence="3">
        <text>an N-(2R-hydroxy-very-long-chain fatty acyl)-(R)-4-hydroxysphingoid base + a 1,2-diacyl-sn-glycero-3-phospho-(1D-myo-inositol) = a 1D-myo-inositol-1-phospho-N-[(R)-2-hydroxy-very-long-chain fatty acyl]-(R)-4-hydroxysphingoid base + a 1,2-diacyl-sn-glycerol</text>
        <dbReference type="Rhea" id="RHEA:64536"/>
        <dbReference type="ChEBI" id="CHEBI:17815"/>
        <dbReference type="ChEBI" id="CHEBI:57880"/>
        <dbReference type="ChEBI" id="CHEBI:155886"/>
        <dbReference type="ChEBI" id="CHEBI:155926"/>
        <dbReference type="EC" id="2.7.1.227"/>
    </reaction>
    <physiologicalReaction direction="left-to-right" evidence="3">
        <dbReference type="Rhea" id="RHEA:64537"/>
    </physiologicalReaction>
</comment>
<comment type="activity regulation">
    <text evidence="6">Inhibited by aureobasidin A (AbA), khafrefungin and rustmicin.</text>
</comment>
<comment type="biophysicochemical properties">
    <kinetics>
        <KM evidence="6">555 uM for phosphatidylinositol</KM>
        <KM evidence="6">3 uM for C(6)-NBD-ceramide</KM>
        <Vmax evidence="6">824.0 pmol/min/mg enzyme for phosphatidylinositol</Vmax>
        <Vmax evidence="6">367.0 pmol/min/mg enzyme for C(6)-NBD-ceramide</Vmax>
    </kinetics>
</comment>
<comment type="subunit">
    <text>Component of the inositol phosphorylceramide synthase complex composed of at least AUR1 and KEI1.</text>
</comment>
<comment type="interaction">
    <interactant intactId="EBI-2046036">
        <id>P36107</id>
    </interactant>
    <interactant intactId="EBI-38431">
        <id>Q06346</id>
        <label>KEI1</label>
    </interactant>
    <organismsDiffer>false</organismsDiffer>
    <experiments>3</experiments>
</comment>
<comment type="subcellular location">
    <subcellularLocation>
        <location evidence="3 7">Golgi apparatus</location>
        <location evidence="3 7">Golgi stack membrane</location>
        <topology evidence="3 7">Multi-pass membrane protein</topology>
    </subcellularLocation>
</comment>
<comment type="miscellaneous">
    <text evidence="4">Present with 4170 molecules/cell in log phase SD medium.</text>
</comment>
<comment type="similarity">
    <text evidence="13">Belongs to the AUR1 family.</text>
</comment>
<feature type="chain" id="PRO_0000064766" description="Inositol phosphorylceramide synthase catalytic subunit AUR1">
    <location>
        <begin position="1"/>
        <end position="401"/>
    </location>
</feature>
<feature type="topological domain" description="Cytoplasmic" evidence="14">
    <location>
        <begin position="1"/>
        <end position="41"/>
    </location>
</feature>
<feature type="transmembrane region" description="Helical" evidence="1">
    <location>
        <begin position="42"/>
        <end position="62"/>
    </location>
</feature>
<feature type="topological domain" description="Lumenal" evidence="14">
    <location>
        <begin position="63"/>
        <end position="64"/>
    </location>
</feature>
<feature type="transmembrane region" description="Helical" evidence="1">
    <location>
        <begin position="65"/>
        <end position="85"/>
    </location>
</feature>
<feature type="topological domain" description="Cytoplasmic" evidence="14">
    <location>
        <begin position="86"/>
        <end position="87"/>
    </location>
</feature>
<feature type="transmembrane region" description="Helical" evidence="1">
    <location>
        <begin position="88"/>
        <end position="108"/>
    </location>
</feature>
<feature type="topological domain" description="Lumenal" evidence="14">
    <location>
        <begin position="109"/>
        <end position="155"/>
    </location>
</feature>
<feature type="transmembrane region" description="Helical" evidence="1">
    <location>
        <begin position="156"/>
        <end position="176"/>
    </location>
</feature>
<feature type="topological domain" description="Cytoplasmic" evidence="14">
    <location>
        <begin position="177"/>
        <end position="178"/>
    </location>
</feature>
<feature type="transmembrane region" description="Helical" evidence="1">
    <location>
        <begin position="179"/>
        <end position="199"/>
    </location>
</feature>
<feature type="topological domain" description="Lumenal" evidence="14">
    <location>
        <begin position="200"/>
        <end position="245"/>
    </location>
</feature>
<feature type="transmembrane region" description="Helical" evidence="1">
    <location>
        <begin position="246"/>
        <end position="266"/>
    </location>
</feature>
<feature type="topological domain" description="Cytoplasmic" evidence="14">
    <location>
        <begin position="267"/>
        <end position="268"/>
    </location>
</feature>
<feature type="transmembrane region" description="Helical" evidence="1">
    <location>
        <begin position="269"/>
        <end position="289"/>
    </location>
</feature>
<feature type="topological domain" description="Lumenal" evidence="14">
    <location>
        <begin position="290"/>
        <end position="291"/>
    </location>
</feature>
<feature type="transmembrane region" description="Helical" evidence="1">
    <location>
        <begin position="292"/>
        <end position="312"/>
    </location>
</feature>
<feature type="topological domain" description="Cytoplasmic" evidence="5">
    <location>
        <begin position="313"/>
        <end position="401"/>
    </location>
</feature>
<feature type="region of interest" description="Disordered" evidence="2">
    <location>
        <begin position="374"/>
        <end position="401"/>
    </location>
</feature>
<feature type="compositionally biased region" description="Low complexity" evidence="2">
    <location>
        <begin position="382"/>
        <end position="395"/>
    </location>
</feature>
<feature type="modified residue" description="Phosphoserine" evidence="15">
    <location>
        <position position="392"/>
    </location>
</feature>
<feature type="modified residue" description="Phosphoserine" evidence="15">
    <location>
        <position position="395"/>
    </location>
</feature>
<feature type="glycosylation site" description="N-linked (GlcNAc...) asparagine" evidence="1">
    <location>
        <position position="132"/>
    </location>
</feature>
<feature type="mutagenesis site" description="AbA resistant; when associated with Y-157." evidence="8">
    <original>L</original>
    <variation>F</variation>
    <location>
        <position position="137"/>
    </location>
</feature>
<feature type="mutagenesis site" description="AbA resistant; when associated with F-137." evidence="8">
    <original>H</original>
    <variation>Y</variation>
    <location>
        <position position="157"/>
    </location>
</feature>
<feature type="mutagenesis site" description="In AUR1-1; AbA resistant." evidence="9">
    <original>F</original>
    <variation>Y</variation>
    <location>
        <position position="158"/>
    </location>
</feature>
<feature type="mutagenesis site" description="Abolishes catalytic activity." evidence="3">
    <original>H</original>
    <variation>A</variation>
    <location>
        <position position="294"/>
    </location>
</feature>
<name>AUR1_YEAST</name>
<dbReference type="EC" id="2.7.1.227" evidence="3"/>
<dbReference type="EMBL" id="U49090">
    <property type="protein sequence ID" value="AAB06940.1"/>
    <property type="molecule type" value="Genomic_DNA"/>
</dbReference>
<dbReference type="EMBL" id="Z28004">
    <property type="protein sequence ID" value="CAA81836.1"/>
    <property type="molecule type" value="Genomic_DNA"/>
</dbReference>
<dbReference type="EMBL" id="BK006944">
    <property type="protein sequence ID" value="DAA09153.1"/>
    <property type="molecule type" value="Genomic_DNA"/>
</dbReference>
<dbReference type="PIR" id="S37815">
    <property type="entry name" value="S37815"/>
</dbReference>
<dbReference type="RefSeq" id="NP_012922.1">
    <property type="nucleotide sequence ID" value="NM_001179570.1"/>
</dbReference>
<dbReference type="BioGRID" id="34129">
    <property type="interactions" value="401"/>
</dbReference>
<dbReference type="ComplexPortal" id="CPX-2894">
    <property type="entry name" value="Inositol phosphorylceramide synthase complex"/>
</dbReference>
<dbReference type="DIP" id="DIP-7196N"/>
<dbReference type="FunCoup" id="P36107">
    <property type="interactions" value="82"/>
</dbReference>
<dbReference type="IntAct" id="P36107">
    <property type="interactions" value="15"/>
</dbReference>
<dbReference type="MINT" id="P36107"/>
<dbReference type="STRING" id="4932.YKL004W"/>
<dbReference type="BindingDB" id="P36107"/>
<dbReference type="ChEMBL" id="CHEMBL1641344"/>
<dbReference type="SwissLipids" id="SLP:000001845"/>
<dbReference type="GlyCosmos" id="P36107">
    <property type="glycosylation" value="1 site, No reported glycans"/>
</dbReference>
<dbReference type="GlyGen" id="P36107">
    <property type="glycosylation" value="1 site"/>
</dbReference>
<dbReference type="iPTMnet" id="P36107"/>
<dbReference type="PaxDb" id="4932-YKL004W"/>
<dbReference type="PeptideAtlas" id="P36107"/>
<dbReference type="DNASU" id="853866"/>
<dbReference type="EnsemblFungi" id="YKL004W_mRNA">
    <property type="protein sequence ID" value="YKL004W"/>
    <property type="gene ID" value="YKL004W"/>
</dbReference>
<dbReference type="GeneID" id="853866"/>
<dbReference type="KEGG" id="sce:YKL004W"/>
<dbReference type="AGR" id="SGD:S000001487"/>
<dbReference type="SGD" id="S000001487">
    <property type="gene designation" value="AUR1"/>
</dbReference>
<dbReference type="VEuPathDB" id="FungiDB:YKL004W"/>
<dbReference type="eggNOG" id="ENOG502QPQM">
    <property type="taxonomic scope" value="Eukaryota"/>
</dbReference>
<dbReference type="GeneTree" id="ENSGT00940000176762"/>
<dbReference type="HOGENOM" id="CLU_030747_2_0_1"/>
<dbReference type="InParanoid" id="P36107"/>
<dbReference type="OMA" id="WSIYDAQ"/>
<dbReference type="OrthoDB" id="5784at2759"/>
<dbReference type="BioCyc" id="MetaCyc:MONOMER3O-630"/>
<dbReference type="BioCyc" id="YEAST:MONOMER3O-630"/>
<dbReference type="BRENDA" id="2.7.1.227">
    <property type="organism ID" value="984"/>
</dbReference>
<dbReference type="SABIO-RK" id="P36107"/>
<dbReference type="BioGRID-ORCS" id="853866">
    <property type="hits" value="9 hits in 10 CRISPR screens"/>
</dbReference>
<dbReference type="PRO" id="PR:P36107"/>
<dbReference type="Proteomes" id="UP000002311">
    <property type="component" value="Chromosome XI"/>
</dbReference>
<dbReference type="RNAct" id="P36107">
    <property type="molecule type" value="protein"/>
</dbReference>
<dbReference type="GO" id="GO:0005783">
    <property type="term" value="C:endoplasmic reticulum"/>
    <property type="evidence" value="ECO:0007005"/>
    <property type="project" value="SGD"/>
</dbReference>
<dbReference type="GO" id="GO:0005794">
    <property type="term" value="C:Golgi apparatus"/>
    <property type="evidence" value="ECO:0000314"/>
    <property type="project" value="SGD"/>
</dbReference>
<dbReference type="GO" id="GO:0032580">
    <property type="term" value="C:Golgi cisterna membrane"/>
    <property type="evidence" value="ECO:0007669"/>
    <property type="project" value="UniProtKB-SubCell"/>
</dbReference>
<dbReference type="GO" id="GO:0070916">
    <property type="term" value="C:inositol phosphoceramide synthase complex"/>
    <property type="evidence" value="ECO:0000353"/>
    <property type="project" value="ComplexPortal"/>
</dbReference>
<dbReference type="GO" id="GO:0045140">
    <property type="term" value="F:inositol phosphoceramide synthase activity"/>
    <property type="evidence" value="ECO:0000314"/>
    <property type="project" value="SGD"/>
</dbReference>
<dbReference type="GO" id="GO:0006673">
    <property type="term" value="P:inositol phosphoceramide metabolic process"/>
    <property type="evidence" value="ECO:0000314"/>
    <property type="project" value="ComplexPortal"/>
</dbReference>
<dbReference type="GO" id="GO:0006676">
    <property type="term" value="P:mannosyl diphosphorylinositol ceramide metabolic process"/>
    <property type="evidence" value="ECO:0000318"/>
    <property type="project" value="GO_Central"/>
</dbReference>
<dbReference type="GO" id="GO:0030148">
    <property type="term" value="P:sphingolipid biosynthetic process"/>
    <property type="evidence" value="ECO:0000315"/>
    <property type="project" value="SGD"/>
</dbReference>
<dbReference type="CDD" id="cd03386">
    <property type="entry name" value="PAP2_Aur1_like"/>
    <property type="match status" value="1"/>
</dbReference>
<dbReference type="FunFam" id="1.20.144.10:FF:000027">
    <property type="entry name" value="Inositol phosphorylceramide synthase"/>
    <property type="match status" value="1"/>
</dbReference>
<dbReference type="Gene3D" id="1.20.144.10">
    <property type="entry name" value="Phosphatidic acid phosphatase type 2/haloperoxidase"/>
    <property type="match status" value="1"/>
</dbReference>
<dbReference type="InterPro" id="IPR026841">
    <property type="entry name" value="Aur1/Ipt1"/>
</dbReference>
<dbReference type="InterPro" id="IPR052185">
    <property type="entry name" value="IPC_Synthase-Related"/>
</dbReference>
<dbReference type="InterPro" id="IPR036938">
    <property type="entry name" value="P_Acid_Pase_2/haloperoxi_sf"/>
</dbReference>
<dbReference type="InterPro" id="IPR000326">
    <property type="entry name" value="P_Acid_Pase_2/haloperoxidase"/>
</dbReference>
<dbReference type="PANTHER" id="PTHR31310">
    <property type="match status" value="1"/>
</dbReference>
<dbReference type="PANTHER" id="PTHR31310:SF11">
    <property type="entry name" value="INOSITOL PHOSPHORYLCERAMIDE SYNTHASE CATALYTIC SUBUNIT AUR1"/>
    <property type="match status" value="1"/>
</dbReference>
<dbReference type="Pfam" id="PF14378">
    <property type="entry name" value="PAP2_3"/>
    <property type="match status" value="1"/>
</dbReference>
<dbReference type="SMART" id="SM00014">
    <property type="entry name" value="acidPPc"/>
    <property type="match status" value="1"/>
</dbReference>
<dbReference type="SUPFAM" id="SSF48317">
    <property type="entry name" value="Acid phosphatase/Vanadium-dependent haloperoxidase"/>
    <property type="match status" value="1"/>
</dbReference>